<gene>
    <name evidence="1" type="primary">pcm</name>
    <name type="ordered locus">PAE0701</name>
</gene>
<protein>
    <recommendedName>
        <fullName evidence="1">Protein-L-isoaspartate O-methyltransferase</fullName>
        <ecNumber evidence="1">2.1.1.77</ecNumber>
    </recommendedName>
    <alternativeName>
        <fullName evidence="1">L-isoaspartyl protein carboxyl methyltransferase</fullName>
    </alternativeName>
    <alternativeName>
        <fullName evidence="1">Protein L-isoaspartyl methyltransferase</fullName>
    </alternativeName>
    <alternativeName>
        <fullName evidence="1">Protein-beta-aspartate methyltransferase</fullName>
        <shortName evidence="1">PIMT</shortName>
    </alternativeName>
</protein>
<comment type="function">
    <text evidence="1">Catalyzes the methyl esterification of L-isoaspartyl residues in peptides and proteins that result from spontaneous decomposition of normal L-aspartyl and L-asparaginyl residues. It plays a role in the repair and/or degradation of damaged proteins.</text>
</comment>
<comment type="catalytic activity">
    <reaction evidence="1">
        <text>[protein]-L-isoaspartate + S-adenosyl-L-methionine = [protein]-L-isoaspartate alpha-methyl ester + S-adenosyl-L-homocysteine</text>
        <dbReference type="Rhea" id="RHEA:12705"/>
        <dbReference type="Rhea" id="RHEA-COMP:12143"/>
        <dbReference type="Rhea" id="RHEA-COMP:12144"/>
        <dbReference type="ChEBI" id="CHEBI:57856"/>
        <dbReference type="ChEBI" id="CHEBI:59789"/>
        <dbReference type="ChEBI" id="CHEBI:90596"/>
        <dbReference type="ChEBI" id="CHEBI:90598"/>
        <dbReference type="EC" id="2.1.1.77"/>
    </reaction>
</comment>
<comment type="subcellular location">
    <subcellularLocation>
        <location evidence="1">Cytoplasm</location>
    </subcellularLocation>
</comment>
<comment type="similarity">
    <text evidence="1">Belongs to the methyltransferase superfamily. L-isoaspartyl/D-aspartyl protein methyltransferase family.</text>
</comment>
<name>PIMT_PYRAE</name>
<reference key="1">
    <citation type="journal article" date="2002" name="Proc. Natl. Acad. Sci. U.S.A.">
        <title>Genome sequence of the hyperthermophilic crenarchaeon Pyrobaculum aerophilum.</title>
        <authorList>
            <person name="Fitz-Gibbon S.T."/>
            <person name="Ladner H."/>
            <person name="Kim U.-J."/>
            <person name="Stetter K.O."/>
            <person name="Simon M.I."/>
            <person name="Miller J.H."/>
        </authorList>
    </citation>
    <scope>NUCLEOTIDE SEQUENCE [LARGE SCALE GENOMIC DNA]</scope>
    <source>
        <strain>ATCC 51768 / DSM 7523 / JCM 9630 / CIP 104966 / NBRC 100827 / IM2</strain>
    </source>
</reference>
<feature type="chain" id="PRO_0000111922" description="Protein-L-isoaspartate O-methyltransferase">
    <location>
        <begin position="1"/>
        <end position="205"/>
    </location>
</feature>
<feature type="active site" evidence="1">
    <location>
        <position position="56"/>
    </location>
</feature>
<feature type="helix" evidence="2">
    <location>
        <begin position="1"/>
        <end position="12"/>
    </location>
</feature>
<feature type="helix" evidence="2">
    <location>
        <begin position="18"/>
        <end position="26"/>
    </location>
</feature>
<feature type="turn" evidence="2">
    <location>
        <begin position="30"/>
        <end position="32"/>
    </location>
</feature>
<feature type="helix" evidence="2">
    <location>
        <begin position="35"/>
        <end position="38"/>
    </location>
</feature>
<feature type="turn" evidence="2">
    <location>
        <begin position="39"/>
        <end position="42"/>
    </location>
</feature>
<feature type="strand" evidence="2">
    <location>
        <begin position="43"/>
        <end position="45"/>
    </location>
</feature>
<feature type="helix" evidence="2">
    <location>
        <begin position="50"/>
        <end position="52"/>
    </location>
</feature>
<feature type="helix" evidence="2">
    <location>
        <begin position="58"/>
        <end position="67"/>
    </location>
</feature>
<feature type="strand" evidence="2">
    <location>
        <begin position="72"/>
        <end position="79"/>
    </location>
</feature>
<feature type="helix" evidence="2">
    <location>
        <begin position="85"/>
        <end position="93"/>
    </location>
</feature>
<feature type="turn" evidence="2">
    <location>
        <begin position="94"/>
        <end position="96"/>
    </location>
</feature>
<feature type="strand" evidence="2">
    <location>
        <begin position="98"/>
        <end position="105"/>
    </location>
</feature>
<feature type="helix" evidence="2">
    <location>
        <begin position="107"/>
        <end position="119"/>
    </location>
</feature>
<feature type="strand" evidence="2">
    <location>
        <begin position="126"/>
        <end position="131"/>
    </location>
</feature>
<feature type="turn" evidence="2">
    <location>
        <begin position="133"/>
        <end position="135"/>
    </location>
</feature>
<feature type="turn" evidence="2">
    <location>
        <begin position="138"/>
        <end position="140"/>
    </location>
</feature>
<feature type="strand" evidence="2">
    <location>
        <begin position="142"/>
        <end position="148"/>
    </location>
</feature>
<feature type="strand" evidence="2">
    <location>
        <begin position="150"/>
        <end position="154"/>
    </location>
</feature>
<feature type="helix" evidence="2">
    <location>
        <begin position="157"/>
        <end position="160"/>
    </location>
</feature>
<feature type="strand" evidence="2">
    <location>
        <begin position="163"/>
        <end position="175"/>
    </location>
</feature>
<feature type="strand" evidence="2">
    <location>
        <begin position="178"/>
        <end position="187"/>
    </location>
</feature>
<feature type="strand" evidence="2">
    <location>
        <begin position="190"/>
        <end position="199"/>
    </location>
</feature>
<keyword id="KW-0002">3D-structure</keyword>
<keyword id="KW-0963">Cytoplasm</keyword>
<keyword id="KW-0489">Methyltransferase</keyword>
<keyword id="KW-1185">Reference proteome</keyword>
<keyword id="KW-0949">S-adenosyl-L-methionine</keyword>
<keyword id="KW-0808">Transferase</keyword>
<organism>
    <name type="scientific">Pyrobaculum aerophilum (strain ATCC 51768 / DSM 7523 / JCM 9630 / CIP 104966 / NBRC 100827 / IM2)</name>
    <dbReference type="NCBI Taxonomy" id="178306"/>
    <lineage>
        <taxon>Archaea</taxon>
        <taxon>Thermoproteota</taxon>
        <taxon>Thermoprotei</taxon>
        <taxon>Thermoproteales</taxon>
        <taxon>Thermoproteaceae</taxon>
        <taxon>Pyrobaculum</taxon>
    </lineage>
</organism>
<sequence length="205" mass="22887">MAKRLVEELERDGIVKSERVKRALLTVPREEFVLPEYRMMAYEDRPLPLFAGATISAPHMVAMMCELIEPRPGMKILEVGTGSGYHAAVCAEAIEKKGRIYTIEIVKELAVFAAQNLERLGYWGVVEVYHGDGKKGLEKHAPFDAIIVTAAADVIPPALIRQLKDGGVMVIPVEERLGQVLYKVVKRGDKIEKKAITYVMFVPLR</sequence>
<proteinExistence type="evidence at protein level"/>
<evidence type="ECO:0000255" key="1">
    <source>
        <dbReference type="HAMAP-Rule" id="MF_00090"/>
    </source>
</evidence>
<evidence type="ECO:0007829" key="2">
    <source>
        <dbReference type="PDB" id="4O29"/>
    </source>
</evidence>
<accession>Q8ZYN0</accession>
<dbReference type="EC" id="2.1.1.77" evidence="1"/>
<dbReference type="EMBL" id="AE009441">
    <property type="protein sequence ID" value="AAL62963.1"/>
    <property type="molecule type" value="Genomic_DNA"/>
</dbReference>
<dbReference type="RefSeq" id="WP_011007435.1">
    <property type="nucleotide sequence ID" value="NC_003364.1"/>
</dbReference>
<dbReference type="PDB" id="4O29">
    <property type="method" value="X-ray"/>
    <property type="resolution" value="2.90 A"/>
    <property type="chains" value="A=1-205"/>
</dbReference>
<dbReference type="PDBsum" id="4O29"/>
<dbReference type="SMR" id="Q8ZYN0"/>
<dbReference type="FunCoup" id="Q8ZYN0">
    <property type="interactions" value="67"/>
</dbReference>
<dbReference type="STRING" id="178306.PAE0701"/>
<dbReference type="EnsemblBacteria" id="AAL62963">
    <property type="protein sequence ID" value="AAL62963"/>
    <property type="gene ID" value="PAE0701"/>
</dbReference>
<dbReference type="GeneID" id="1465189"/>
<dbReference type="KEGG" id="pai:PAE0701"/>
<dbReference type="PATRIC" id="fig|178306.9.peg.508"/>
<dbReference type="eggNOG" id="arCOG00976">
    <property type="taxonomic scope" value="Archaea"/>
</dbReference>
<dbReference type="HOGENOM" id="CLU_055432_2_0_2"/>
<dbReference type="InParanoid" id="Q8ZYN0"/>
<dbReference type="EvolutionaryTrace" id="Q8ZYN0"/>
<dbReference type="Proteomes" id="UP000002439">
    <property type="component" value="Chromosome"/>
</dbReference>
<dbReference type="GO" id="GO:0005737">
    <property type="term" value="C:cytoplasm"/>
    <property type="evidence" value="ECO:0000318"/>
    <property type="project" value="GO_Central"/>
</dbReference>
<dbReference type="GO" id="GO:0004719">
    <property type="term" value="F:protein-L-isoaspartate (D-aspartate) O-methyltransferase activity"/>
    <property type="evidence" value="ECO:0000318"/>
    <property type="project" value="GO_Central"/>
</dbReference>
<dbReference type="GO" id="GO:0032259">
    <property type="term" value="P:methylation"/>
    <property type="evidence" value="ECO:0007669"/>
    <property type="project" value="UniProtKB-KW"/>
</dbReference>
<dbReference type="GO" id="GO:0036211">
    <property type="term" value="P:protein modification process"/>
    <property type="evidence" value="ECO:0007669"/>
    <property type="project" value="UniProtKB-UniRule"/>
</dbReference>
<dbReference type="GO" id="GO:0030091">
    <property type="term" value="P:protein repair"/>
    <property type="evidence" value="ECO:0007669"/>
    <property type="project" value="UniProtKB-UniRule"/>
</dbReference>
<dbReference type="CDD" id="cd02440">
    <property type="entry name" value="AdoMet_MTases"/>
    <property type="match status" value="1"/>
</dbReference>
<dbReference type="FunFam" id="3.40.50.150:FF:000010">
    <property type="entry name" value="Protein-L-isoaspartate O-methyltransferase"/>
    <property type="match status" value="1"/>
</dbReference>
<dbReference type="Gene3D" id="3.40.50.150">
    <property type="entry name" value="Vaccinia Virus protein VP39"/>
    <property type="match status" value="1"/>
</dbReference>
<dbReference type="HAMAP" id="MF_00090">
    <property type="entry name" value="PIMT"/>
    <property type="match status" value="1"/>
</dbReference>
<dbReference type="InterPro" id="IPR000682">
    <property type="entry name" value="PCMT"/>
</dbReference>
<dbReference type="InterPro" id="IPR029063">
    <property type="entry name" value="SAM-dependent_MTases_sf"/>
</dbReference>
<dbReference type="NCBIfam" id="TIGR00080">
    <property type="entry name" value="pimt"/>
    <property type="match status" value="1"/>
</dbReference>
<dbReference type="NCBIfam" id="NF001453">
    <property type="entry name" value="PRK00312.1"/>
    <property type="match status" value="1"/>
</dbReference>
<dbReference type="PANTHER" id="PTHR11579">
    <property type="entry name" value="PROTEIN-L-ISOASPARTATE O-METHYLTRANSFERASE"/>
    <property type="match status" value="1"/>
</dbReference>
<dbReference type="PANTHER" id="PTHR11579:SF0">
    <property type="entry name" value="PROTEIN-L-ISOASPARTATE(D-ASPARTATE) O-METHYLTRANSFERASE"/>
    <property type="match status" value="1"/>
</dbReference>
<dbReference type="Pfam" id="PF01135">
    <property type="entry name" value="PCMT"/>
    <property type="match status" value="1"/>
</dbReference>
<dbReference type="SUPFAM" id="SSF53335">
    <property type="entry name" value="S-adenosyl-L-methionine-dependent methyltransferases"/>
    <property type="match status" value="1"/>
</dbReference>
<dbReference type="PROSITE" id="PS01279">
    <property type="entry name" value="PCMT"/>
    <property type="match status" value="1"/>
</dbReference>